<name>LSRG_SALCH</name>
<keyword id="KW-0963">Cytoplasm</keyword>
<keyword id="KW-0413">Isomerase</keyword>
<evidence type="ECO:0000255" key="1">
    <source>
        <dbReference type="HAMAP-Rule" id="MF_02051"/>
    </source>
</evidence>
<evidence type="ECO:0000305" key="2"/>
<gene>
    <name evidence="1" type="primary">lsrG</name>
    <name type="ordered locus">SCH_3968</name>
</gene>
<sequence length="96" mass="11218">MHVTLVEINVHDDKVEQFIDVFRQNHLGSIKEPGNLRFDVLQDPQVPTRFYIYEAYVDEQAVAFHKTTPHYKTCVEQLEPLMTGPRTKKVFMGLMP</sequence>
<proteinExistence type="inferred from homology"/>
<protein>
    <recommendedName>
        <fullName evidence="1">(4S)-4-hydroxy-5-phosphonooxypentane-2,3-dione isomerase</fullName>
        <ecNumber evidence="1">5.3.1.32</ecNumber>
    </recommendedName>
    <alternativeName>
        <fullName evidence="1">Autoinducer 2-degrading protein LsrG</fullName>
        <shortName evidence="1">AI-2-degrading protein LsrG</shortName>
    </alternativeName>
    <alternativeName>
        <fullName evidence="1">Phospho-(S)-4,5-dihydroxy-2,3-pentanedione isomerase</fullName>
    </alternativeName>
    <alternativeName>
        <fullName evidence="1">Phospho-AI-2 isomerase</fullName>
    </alternativeName>
</protein>
<accession>Q57HD8</accession>
<organism>
    <name type="scientific">Salmonella choleraesuis (strain SC-B67)</name>
    <dbReference type="NCBI Taxonomy" id="321314"/>
    <lineage>
        <taxon>Bacteria</taxon>
        <taxon>Pseudomonadati</taxon>
        <taxon>Pseudomonadota</taxon>
        <taxon>Gammaproteobacteria</taxon>
        <taxon>Enterobacterales</taxon>
        <taxon>Enterobacteriaceae</taxon>
        <taxon>Salmonella</taxon>
    </lineage>
</organism>
<dbReference type="EC" id="5.3.1.32" evidence="1"/>
<dbReference type="EMBL" id="AE017220">
    <property type="protein sequence ID" value="AAX67874.1"/>
    <property type="status" value="ALT_INIT"/>
    <property type="molecule type" value="Genomic_DNA"/>
</dbReference>
<dbReference type="RefSeq" id="WP_001543603.1">
    <property type="nucleotide sequence ID" value="NC_006905.1"/>
</dbReference>
<dbReference type="SMR" id="Q57HD8"/>
<dbReference type="KEGG" id="sec:SCH_3968"/>
<dbReference type="HOGENOM" id="CLU_131496_3_0_6"/>
<dbReference type="Proteomes" id="UP000000538">
    <property type="component" value="Chromosome"/>
</dbReference>
<dbReference type="GO" id="GO:0005829">
    <property type="term" value="C:cytosol"/>
    <property type="evidence" value="ECO:0007669"/>
    <property type="project" value="TreeGrafter"/>
</dbReference>
<dbReference type="GO" id="GO:0002952">
    <property type="term" value="F:(4S)-4-hydroxy-5-phosphonooxypentane-2,3-dione isomerase activity"/>
    <property type="evidence" value="ECO:0007669"/>
    <property type="project" value="UniProtKB-EC"/>
</dbReference>
<dbReference type="GO" id="GO:0016491">
    <property type="term" value="F:oxidoreductase activity"/>
    <property type="evidence" value="ECO:0007669"/>
    <property type="project" value="TreeGrafter"/>
</dbReference>
<dbReference type="FunFam" id="3.30.70.100:FF:000016">
    <property type="entry name" value="(4S)-4-hydroxy-5-phosphonooxypentane-2,3-dione isomerase"/>
    <property type="match status" value="1"/>
</dbReference>
<dbReference type="Gene3D" id="3.30.70.100">
    <property type="match status" value="1"/>
</dbReference>
<dbReference type="HAMAP" id="MF_02051">
    <property type="entry name" value="LsrG"/>
    <property type="match status" value="1"/>
</dbReference>
<dbReference type="InterPro" id="IPR007138">
    <property type="entry name" value="ABM_dom"/>
</dbReference>
<dbReference type="InterPro" id="IPR050744">
    <property type="entry name" value="AI-2_Isomerase_LsrG"/>
</dbReference>
<dbReference type="InterPro" id="IPR011008">
    <property type="entry name" value="Dimeric_a/b-barrel"/>
</dbReference>
<dbReference type="InterPro" id="IPR033672">
    <property type="entry name" value="LsrG"/>
</dbReference>
<dbReference type="NCBIfam" id="NF007791">
    <property type="entry name" value="PRK10486.1"/>
    <property type="match status" value="1"/>
</dbReference>
<dbReference type="PANTHER" id="PTHR33336:SF1">
    <property type="entry name" value="(4S)-4-HYDROXY-5-PHOSPHONOOXYPENTANE-2,3-DIONE ISOMERASE"/>
    <property type="match status" value="1"/>
</dbReference>
<dbReference type="PANTHER" id="PTHR33336">
    <property type="entry name" value="QUINOL MONOOXYGENASE YGIN-RELATED"/>
    <property type="match status" value="1"/>
</dbReference>
<dbReference type="Pfam" id="PF03992">
    <property type="entry name" value="ABM"/>
    <property type="match status" value="1"/>
</dbReference>
<dbReference type="SUPFAM" id="SSF54909">
    <property type="entry name" value="Dimeric alpha+beta barrel"/>
    <property type="match status" value="1"/>
</dbReference>
<dbReference type="PROSITE" id="PS51725">
    <property type="entry name" value="ABM"/>
    <property type="match status" value="1"/>
</dbReference>
<reference key="1">
    <citation type="journal article" date="2005" name="Nucleic Acids Res.">
        <title>The genome sequence of Salmonella enterica serovar Choleraesuis, a highly invasive and resistant zoonotic pathogen.</title>
        <authorList>
            <person name="Chiu C.-H."/>
            <person name="Tang P."/>
            <person name="Chu C."/>
            <person name="Hu S."/>
            <person name="Bao Q."/>
            <person name="Yu J."/>
            <person name="Chou Y.-Y."/>
            <person name="Wang H.-S."/>
            <person name="Lee Y.-S."/>
        </authorList>
    </citation>
    <scope>NUCLEOTIDE SEQUENCE [LARGE SCALE GENOMIC DNA]</scope>
    <source>
        <strain>SC-B67</strain>
    </source>
</reference>
<feature type="chain" id="PRO_0000351569" description="(4S)-4-hydroxy-5-phosphonooxypentane-2,3-dione isomerase">
    <location>
        <begin position="1"/>
        <end position="96"/>
    </location>
</feature>
<feature type="domain" description="ABM" evidence="1">
    <location>
        <begin position="2"/>
        <end position="91"/>
    </location>
</feature>
<comment type="function">
    <text evidence="1">Involved in the degradation of phospho-AI-2, thereby terminating induction of the lsr operon and closing the AI-2 signaling cycle. Catalyzes the conversion of (4S)-4-hydroxy-5-phosphonooxypentane-2,3-dione (P-DPD) to 3-hydroxy-5-phosphonooxypentane-2,4-dione (P-HPD).</text>
</comment>
<comment type="catalytic activity">
    <reaction evidence="1">
        <text>(2S)-2-hydroxy-3,4-dioxopentyl phosphate = 3-hydroxy-2,4-dioxopentyl phosphate</text>
        <dbReference type="Rhea" id="RHEA:44360"/>
        <dbReference type="ChEBI" id="CHEBI:71677"/>
        <dbReference type="ChEBI" id="CHEBI:84359"/>
        <dbReference type="EC" id="5.3.1.32"/>
    </reaction>
</comment>
<comment type="subunit">
    <text evidence="1">Homodimer.</text>
</comment>
<comment type="subcellular location">
    <subcellularLocation>
        <location evidence="1">Cytoplasm</location>
    </subcellularLocation>
</comment>
<comment type="similarity">
    <text evidence="1">Belongs to the LsrG family.</text>
</comment>
<comment type="sequence caution" evidence="2">
    <conflict type="erroneous initiation">
        <sequence resource="EMBL-CDS" id="AAX67874"/>
    </conflict>
    <text>Extended N-terminus.</text>
</comment>